<gene>
    <name evidence="1" type="primary">rsmH</name>
    <name type="synonym">mraW</name>
    <name type="ordered locus">Sare_3446</name>
</gene>
<accession>A8LX88</accession>
<keyword id="KW-0963">Cytoplasm</keyword>
<keyword id="KW-0489">Methyltransferase</keyword>
<keyword id="KW-0698">rRNA processing</keyword>
<keyword id="KW-0949">S-adenosyl-L-methionine</keyword>
<keyword id="KW-0808">Transferase</keyword>
<evidence type="ECO:0000255" key="1">
    <source>
        <dbReference type="HAMAP-Rule" id="MF_01007"/>
    </source>
</evidence>
<evidence type="ECO:0000256" key="2">
    <source>
        <dbReference type="SAM" id="MobiDB-lite"/>
    </source>
</evidence>
<sequence>MGVDMGELRGAHVPVLLERCLELLAPALGRAGRTVYVDATLGLGGHAEAVLATHPQTMLVGLDRDTEALAHARVRLARFADRVHLEHAVYDELPDVLDRLGHPVVDGILFDLGVSSLQLDAPDRGFAYAQDAPLDMRMDQTRGLTAEEVVNTYPHPDLARVLRVYGEEKFAPRIASAIVRERERDPITSSARLAELVRQTIPAPARRTGGHPAKRTFQALRIEVNRELAALETALPAALDRLTIEGRLVVLSYHSLEDRLTKVALADRVRSKGPVDLPVELPGTGPTFRLLSRGAELPGEAEVAMNPRAASVRLRAAERLDPTAEQRRRTDRERYRRRVRAMHQPGTGSAVRRPTPGDDGTGTDEEGEGHDS</sequence>
<comment type="function">
    <text evidence="1">Specifically methylates the N4 position of cytidine in position 1402 (C1402) of 16S rRNA.</text>
</comment>
<comment type="catalytic activity">
    <reaction evidence="1">
        <text>cytidine(1402) in 16S rRNA + S-adenosyl-L-methionine = N(4)-methylcytidine(1402) in 16S rRNA + S-adenosyl-L-homocysteine + H(+)</text>
        <dbReference type="Rhea" id="RHEA:42928"/>
        <dbReference type="Rhea" id="RHEA-COMP:10286"/>
        <dbReference type="Rhea" id="RHEA-COMP:10287"/>
        <dbReference type="ChEBI" id="CHEBI:15378"/>
        <dbReference type="ChEBI" id="CHEBI:57856"/>
        <dbReference type="ChEBI" id="CHEBI:59789"/>
        <dbReference type="ChEBI" id="CHEBI:74506"/>
        <dbReference type="ChEBI" id="CHEBI:82748"/>
        <dbReference type="EC" id="2.1.1.199"/>
    </reaction>
</comment>
<comment type="subcellular location">
    <subcellularLocation>
        <location evidence="1">Cytoplasm</location>
    </subcellularLocation>
</comment>
<comment type="similarity">
    <text evidence="1">Belongs to the methyltransferase superfamily. RsmH family.</text>
</comment>
<proteinExistence type="inferred from homology"/>
<reference key="1">
    <citation type="submission" date="2007-10" db="EMBL/GenBank/DDBJ databases">
        <title>Complete sequence of Salinispora arenicola CNS-205.</title>
        <authorList>
            <consortium name="US DOE Joint Genome Institute"/>
            <person name="Copeland A."/>
            <person name="Lucas S."/>
            <person name="Lapidus A."/>
            <person name="Barry K."/>
            <person name="Glavina del Rio T."/>
            <person name="Dalin E."/>
            <person name="Tice H."/>
            <person name="Pitluck S."/>
            <person name="Foster B."/>
            <person name="Schmutz J."/>
            <person name="Larimer F."/>
            <person name="Land M."/>
            <person name="Hauser L."/>
            <person name="Kyrpides N."/>
            <person name="Ivanova N."/>
            <person name="Jensen P.R."/>
            <person name="Moore B.S."/>
            <person name="Penn K."/>
            <person name="Jenkins C."/>
            <person name="Udwary D."/>
            <person name="Xiang L."/>
            <person name="Gontang E."/>
            <person name="Richardson P."/>
        </authorList>
    </citation>
    <scope>NUCLEOTIDE SEQUENCE [LARGE SCALE GENOMIC DNA]</scope>
    <source>
        <strain>CNS-205</strain>
    </source>
</reference>
<feature type="chain" id="PRO_0000387095" description="Ribosomal RNA small subunit methyltransferase H">
    <location>
        <begin position="1"/>
        <end position="372"/>
    </location>
</feature>
<feature type="region of interest" description="Disordered" evidence="2">
    <location>
        <begin position="315"/>
        <end position="372"/>
    </location>
</feature>
<feature type="compositionally biased region" description="Basic and acidic residues" evidence="2">
    <location>
        <begin position="315"/>
        <end position="334"/>
    </location>
</feature>
<feature type="compositionally biased region" description="Acidic residues" evidence="2">
    <location>
        <begin position="361"/>
        <end position="372"/>
    </location>
</feature>
<feature type="binding site" evidence="1">
    <location>
        <begin position="44"/>
        <end position="46"/>
    </location>
    <ligand>
        <name>S-adenosyl-L-methionine</name>
        <dbReference type="ChEBI" id="CHEBI:59789"/>
    </ligand>
</feature>
<feature type="binding site" evidence="1">
    <location>
        <position position="63"/>
    </location>
    <ligand>
        <name>S-adenosyl-L-methionine</name>
        <dbReference type="ChEBI" id="CHEBI:59789"/>
    </ligand>
</feature>
<feature type="binding site" evidence="1">
    <location>
        <position position="97"/>
    </location>
    <ligand>
        <name>S-adenosyl-L-methionine</name>
        <dbReference type="ChEBI" id="CHEBI:59789"/>
    </ligand>
</feature>
<feature type="binding site" evidence="1">
    <location>
        <position position="111"/>
    </location>
    <ligand>
        <name>S-adenosyl-L-methionine</name>
        <dbReference type="ChEBI" id="CHEBI:59789"/>
    </ligand>
</feature>
<feature type="binding site" evidence="1">
    <location>
        <position position="118"/>
    </location>
    <ligand>
        <name>S-adenosyl-L-methionine</name>
        <dbReference type="ChEBI" id="CHEBI:59789"/>
    </ligand>
</feature>
<dbReference type="EC" id="2.1.1.199" evidence="1"/>
<dbReference type="EMBL" id="CP000850">
    <property type="protein sequence ID" value="ABV99248.1"/>
    <property type="molecule type" value="Genomic_DNA"/>
</dbReference>
<dbReference type="SMR" id="A8LX88"/>
<dbReference type="STRING" id="391037.Sare_3446"/>
<dbReference type="KEGG" id="saq:Sare_3446"/>
<dbReference type="eggNOG" id="COG0275">
    <property type="taxonomic scope" value="Bacteria"/>
</dbReference>
<dbReference type="HOGENOM" id="CLU_038422_0_0_11"/>
<dbReference type="GO" id="GO:0005737">
    <property type="term" value="C:cytoplasm"/>
    <property type="evidence" value="ECO:0007669"/>
    <property type="project" value="UniProtKB-SubCell"/>
</dbReference>
<dbReference type="GO" id="GO:0071424">
    <property type="term" value="F:rRNA (cytosine-N4-)-methyltransferase activity"/>
    <property type="evidence" value="ECO:0007669"/>
    <property type="project" value="UniProtKB-UniRule"/>
</dbReference>
<dbReference type="GO" id="GO:0070475">
    <property type="term" value="P:rRNA base methylation"/>
    <property type="evidence" value="ECO:0007669"/>
    <property type="project" value="UniProtKB-UniRule"/>
</dbReference>
<dbReference type="FunFam" id="1.10.150.170:FF:000001">
    <property type="entry name" value="Ribosomal RNA small subunit methyltransferase H"/>
    <property type="match status" value="1"/>
</dbReference>
<dbReference type="Gene3D" id="1.10.150.170">
    <property type="entry name" value="Putative methyltransferase TM0872, insert domain"/>
    <property type="match status" value="1"/>
</dbReference>
<dbReference type="Gene3D" id="3.40.50.150">
    <property type="entry name" value="Vaccinia Virus protein VP39"/>
    <property type="match status" value="1"/>
</dbReference>
<dbReference type="HAMAP" id="MF_01007">
    <property type="entry name" value="16SrRNA_methyltr_H"/>
    <property type="match status" value="1"/>
</dbReference>
<dbReference type="InterPro" id="IPR002903">
    <property type="entry name" value="RsmH"/>
</dbReference>
<dbReference type="InterPro" id="IPR023397">
    <property type="entry name" value="SAM-dep_MeTrfase_MraW_recog"/>
</dbReference>
<dbReference type="InterPro" id="IPR029063">
    <property type="entry name" value="SAM-dependent_MTases_sf"/>
</dbReference>
<dbReference type="NCBIfam" id="TIGR00006">
    <property type="entry name" value="16S rRNA (cytosine(1402)-N(4))-methyltransferase RsmH"/>
    <property type="match status" value="1"/>
</dbReference>
<dbReference type="PANTHER" id="PTHR11265:SF0">
    <property type="entry name" value="12S RRNA N4-METHYLCYTIDINE METHYLTRANSFERASE"/>
    <property type="match status" value="1"/>
</dbReference>
<dbReference type="PANTHER" id="PTHR11265">
    <property type="entry name" value="S-ADENOSYL-METHYLTRANSFERASE MRAW"/>
    <property type="match status" value="1"/>
</dbReference>
<dbReference type="Pfam" id="PF01795">
    <property type="entry name" value="Methyltransf_5"/>
    <property type="match status" value="1"/>
</dbReference>
<dbReference type="SUPFAM" id="SSF81799">
    <property type="entry name" value="Putative methyltransferase TM0872, insert domain"/>
    <property type="match status" value="1"/>
</dbReference>
<dbReference type="SUPFAM" id="SSF53335">
    <property type="entry name" value="S-adenosyl-L-methionine-dependent methyltransferases"/>
    <property type="match status" value="1"/>
</dbReference>
<organism>
    <name type="scientific">Salinispora arenicola (strain CNS-205)</name>
    <dbReference type="NCBI Taxonomy" id="391037"/>
    <lineage>
        <taxon>Bacteria</taxon>
        <taxon>Bacillati</taxon>
        <taxon>Actinomycetota</taxon>
        <taxon>Actinomycetes</taxon>
        <taxon>Micromonosporales</taxon>
        <taxon>Micromonosporaceae</taxon>
        <taxon>Salinispora</taxon>
    </lineage>
</organism>
<name>RSMH_SALAI</name>
<protein>
    <recommendedName>
        <fullName evidence="1">Ribosomal RNA small subunit methyltransferase H</fullName>
        <ecNumber evidence="1">2.1.1.199</ecNumber>
    </recommendedName>
    <alternativeName>
        <fullName evidence="1">16S rRNA m(4)C1402 methyltransferase</fullName>
    </alternativeName>
    <alternativeName>
        <fullName evidence="1">rRNA (cytosine-N(4)-)-methyltransferase RsmH</fullName>
    </alternativeName>
</protein>